<accession>B6I8Z0</accession>
<comment type="function">
    <text evidence="1">Activates KDO (a required 8-carbon sugar) for incorporation into bacterial lipopolysaccharide in Gram-negative bacteria.</text>
</comment>
<comment type="catalytic activity">
    <reaction evidence="1">
        <text>3-deoxy-alpha-D-manno-oct-2-ulosonate + CTP = CMP-3-deoxy-beta-D-manno-octulosonate + diphosphate</text>
        <dbReference type="Rhea" id="RHEA:23448"/>
        <dbReference type="ChEBI" id="CHEBI:33019"/>
        <dbReference type="ChEBI" id="CHEBI:37563"/>
        <dbReference type="ChEBI" id="CHEBI:85986"/>
        <dbReference type="ChEBI" id="CHEBI:85987"/>
        <dbReference type="EC" id="2.7.7.38"/>
    </reaction>
</comment>
<comment type="pathway">
    <text evidence="1">Nucleotide-sugar biosynthesis; CMP-3-deoxy-D-manno-octulosonate biosynthesis; CMP-3-deoxy-D-manno-octulosonate from 3-deoxy-D-manno-octulosonate and CTP: step 1/1.</text>
</comment>
<comment type="pathway">
    <text evidence="1">Bacterial outer membrane biogenesis; lipopolysaccharide biosynthesis.</text>
</comment>
<comment type="subcellular location">
    <subcellularLocation>
        <location evidence="1">Cytoplasm</location>
    </subcellularLocation>
</comment>
<comment type="similarity">
    <text evidence="1">Belongs to the KdsB family.</text>
</comment>
<keyword id="KW-0963">Cytoplasm</keyword>
<keyword id="KW-0448">Lipopolysaccharide biosynthesis</keyword>
<keyword id="KW-0548">Nucleotidyltransferase</keyword>
<keyword id="KW-0808">Transferase</keyword>
<proteinExistence type="inferred from homology"/>
<gene>
    <name evidence="1" type="primary">kdsB</name>
    <name type="ordered locus">ECSE_0977</name>
</gene>
<reference key="1">
    <citation type="journal article" date="2008" name="DNA Res.">
        <title>Complete genome sequence and comparative analysis of the wild-type commensal Escherichia coli strain SE11 isolated from a healthy adult.</title>
        <authorList>
            <person name="Oshima K."/>
            <person name="Toh H."/>
            <person name="Ogura Y."/>
            <person name="Sasamoto H."/>
            <person name="Morita H."/>
            <person name="Park S.-H."/>
            <person name="Ooka T."/>
            <person name="Iyoda S."/>
            <person name="Taylor T.D."/>
            <person name="Hayashi T."/>
            <person name="Itoh K."/>
            <person name="Hattori M."/>
        </authorList>
    </citation>
    <scope>NUCLEOTIDE SEQUENCE [LARGE SCALE GENOMIC DNA]</scope>
    <source>
        <strain>SE11</strain>
    </source>
</reference>
<evidence type="ECO:0000255" key="1">
    <source>
        <dbReference type="HAMAP-Rule" id="MF_00057"/>
    </source>
</evidence>
<sequence length="248" mass="27600">MSFVVIIPARYASTRLPGKPLVDINGKPMIVHVLERARESGADRIIVATDHEDVARAVEAAGGEVCMTRADHQSGTERLAEVVEKCAFSDDTVIVNVQGDEPMIPATIIRQVADNLAQRQVGMATLAVPIHNAEEAFNPNAVKVVLDAEGYALYFSRATIPWDRDRFAEGLETVGDNFLRHLGIYGYRAGFIRRYVNWQPSPLEHIEMLEQLRVLWYGEKIHVAVAQEVPGTGVDTPEDLERVRAEMR</sequence>
<dbReference type="EC" id="2.7.7.38" evidence="1"/>
<dbReference type="EMBL" id="AP009240">
    <property type="protein sequence ID" value="BAG76501.1"/>
    <property type="molecule type" value="Genomic_DNA"/>
</dbReference>
<dbReference type="RefSeq" id="WP_000011590.1">
    <property type="nucleotide sequence ID" value="NC_011415.1"/>
</dbReference>
<dbReference type="SMR" id="B6I8Z0"/>
<dbReference type="KEGG" id="ecy:ECSE_0977"/>
<dbReference type="HOGENOM" id="CLU_065038_1_0_6"/>
<dbReference type="UniPathway" id="UPA00030"/>
<dbReference type="UniPathway" id="UPA00358">
    <property type="reaction ID" value="UER00476"/>
</dbReference>
<dbReference type="Proteomes" id="UP000008199">
    <property type="component" value="Chromosome"/>
</dbReference>
<dbReference type="GO" id="GO:0005829">
    <property type="term" value="C:cytosol"/>
    <property type="evidence" value="ECO:0007669"/>
    <property type="project" value="TreeGrafter"/>
</dbReference>
<dbReference type="GO" id="GO:0008690">
    <property type="term" value="F:3-deoxy-manno-octulosonate cytidylyltransferase activity"/>
    <property type="evidence" value="ECO:0007669"/>
    <property type="project" value="UniProtKB-UniRule"/>
</dbReference>
<dbReference type="GO" id="GO:0033468">
    <property type="term" value="P:CMP-keto-3-deoxy-D-manno-octulosonic acid biosynthetic process"/>
    <property type="evidence" value="ECO:0007669"/>
    <property type="project" value="UniProtKB-UniRule"/>
</dbReference>
<dbReference type="GO" id="GO:0009103">
    <property type="term" value="P:lipopolysaccharide biosynthetic process"/>
    <property type="evidence" value="ECO:0007669"/>
    <property type="project" value="UniProtKB-UniRule"/>
</dbReference>
<dbReference type="CDD" id="cd02517">
    <property type="entry name" value="CMP-KDO-Synthetase"/>
    <property type="match status" value="1"/>
</dbReference>
<dbReference type="FunFam" id="3.90.550.10:FF:000011">
    <property type="entry name" value="3-deoxy-manno-octulosonate cytidylyltransferase"/>
    <property type="match status" value="1"/>
</dbReference>
<dbReference type="Gene3D" id="3.90.550.10">
    <property type="entry name" value="Spore Coat Polysaccharide Biosynthesis Protein SpsA, Chain A"/>
    <property type="match status" value="1"/>
</dbReference>
<dbReference type="HAMAP" id="MF_00057">
    <property type="entry name" value="KdsB"/>
    <property type="match status" value="1"/>
</dbReference>
<dbReference type="InterPro" id="IPR003329">
    <property type="entry name" value="Cytidylyl_trans"/>
</dbReference>
<dbReference type="InterPro" id="IPR004528">
    <property type="entry name" value="KdsB"/>
</dbReference>
<dbReference type="InterPro" id="IPR029044">
    <property type="entry name" value="Nucleotide-diphossugar_trans"/>
</dbReference>
<dbReference type="NCBIfam" id="TIGR00466">
    <property type="entry name" value="kdsB"/>
    <property type="match status" value="1"/>
</dbReference>
<dbReference type="NCBIfam" id="NF003950">
    <property type="entry name" value="PRK05450.1-3"/>
    <property type="match status" value="1"/>
</dbReference>
<dbReference type="NCBIfam" id="NF003952">
    <property type="entry name" value="PRK05450.1-5"/>
    <property type="match status" value="1"/>
</dbReference>
<dbReference type="NCBIfam" id="NF009905">
    <property type="entry name" value="PRK13368.1"/>
    <property type="match status" value="1"/>
</dbReference>
<dbReference type="PANTHER" id="PTHR42866">
    <property type="entry name" value="3-DEOXY-MANNO-OCTULOSONATE CYTIDYLYLTRANSFERASE"/>
    <property type="match status" value="1"/>
</dbReference>
<dbReference type="PANTHER" id="PTHR42866:SF2">
    <property type="entry name" value="3-DEOXY-MANNO-OCTULOSONATE CYTIDYLYLTRANSFERASE, MITOCHONDRIAL"/>
    <property type="match status" value="1"/>
</dbReference>
<dbReference type="Pfam" id="PF02348">
    <property type="entry name" value="CTP_transf_3"/>
    <property type="match status" value="1"/>
</dbReference>
<dbReference type="SUPFAM" id="SSF53448">
    <property type="entry name" value="Nucleotide-diphospho-sugar transferases"/>
    <property type="match status" value="1"/>
</dbReference>
<protein>
    <recommendedName>
        <fullName evidence="1">3-deoxy-manno-octulosonate cytidylyltransferase</fullName>
        <ecNumber evidence="1">2.7.7.38</ecNumber>
    </recommendedName>
    <alternativeName>
        <fullName evidence="1">CMP-2-keto-3-deoxyoctulosonic acid synthase</fullName>
        <shortName evidence="1">CKS</shortName>
        <shortName evidence="1">CMP-KDO synthase</shortName>
    </alternativeName>
</protein>
<feature type="chain" id="PRO_1000091870" description="3-deoxy-manno-octulosonate cytidylyltransferase">
    <location>
        <begin position="1"/>
        <end position="248"/>
    </location>
</feature>
<name>KDSB_ECOSE</name>
<organism>
    <name type="scientific">Escherichia coli (strain SE11)</name>
    <dbReference type="NCBI Taxonomy" id="409438"/>
    <lineage>
        <taxon>Bacteria</taxon>
        <taxon>Pseudomonadati</taxon>
        <taxon>Pseudomonadota</taxon>
        <taxon>Gammaproteobacteria</taxon>
        <taxon>Enterobacterales</taxon>
        <taxon>Enterobacteriaceae</taxon>
        <taxon>Escherichia</taxon>
    </lineage>
</organism>